<organism>
    <name type="scientific">Campylobacter jejuni subsp. jejuni serotype O:2 (strain ATCC 700819 / NCTC 11168)</name>
    <dbReference type="NCBI Taxonomy" id="192222"/>
    <lineage>
        <taxon>Bacteria</taxon>
        <taxon>Pseudomonadati</taxon>
        <taxon>Campylobacterota</taxon>
        <taxon>Epsilonproteobacteria</taxon>
        <taxon>Campylobacterales</taxon>
        <taxon>Campylobacteraceae</taxon>
        <taxon>Campylobacter</taxon>
    </lineage>
</organism>
<dbReference type="EC" id="3.5.4.13" evidence="1"/>
<dbReference type="EMBL" id="AL111168">
    <property type="protein sequence ID" value="CAL35406.1"/>
    <property type="molecule type" value="Genomic_DNA"/>
</dbReference>
<dbReference type="PIR" id="A81272">
    <property type="entry name" value="A81272"/>
</dbReference>
<dbReference type="RefSeq" id="WP_002854086.1">
    <property type="nucleotide sequence ID" value="NZ_SZUC01000001.1"/>
</dbReference>
<dbReference type="RefSeq" id="YP_002344682.1">
    <property type="nucleotide sequence ID" value="NC_002163.1"/>
</dbReference>
<dbReference type="SMR" id="Q9PN07"/>
<dbReference type="IntAct" id="Q9PN07">
    <property type="interactions" value="18"/>
</dbReference>
<dbReference type="STRING" id="192222.Cj1292"/>
<dbReference type="BindingDB" id="Q9PN07"/>
<dbReference type="PaxDb" id="192222-Cj1292"/>
<dbReference type="EnsemblBacteria" id="CAL35406">
    <property type="protein sequence ID" value="CAL35406"/>
    <property type="gene ID" value="Cj1292"/>
</dbReference>
<dbReference type="GeneID" id="905584"/>
<dbReference type="KEGG" id="cje:Cj1292"/>
<dbReference type="PATRIC" id="fig|192222.6.peg.1274"/>
<dbReference type="eggNOG" id="COG0717">
    <property type="taxonomic scope" value="Bacteria"/>
</dbReference>
<dbReference type="HOGENOM" id="CLU_087476_4_0_7"/>
<dbReference type="OrthoDB" id="9780956at2"/>
<dbReference type="UniPathway" id="UPA00610">
    <property type="reaction ID" value="UER00665"/>
</dbReference>
<dbReference type="Proteomes" id="UP000000799">
    <property type="component" value="Chromosome"/>
</dbReference>
<dbReference type="GO" id="GO:0008829">
    <property type="term" value="F:dCTP deaminase activity"/>
    <property type="evidence" value="ECO:0007669"/>
    <property type="project" value="UniProtKB-UniRule"/>
</dbReference>
<dbReference type="GO" id="GO:0000166">
    <property type="term" value="F:nucleotide binding"/>
    <property type="evidence" value="ECO:0007669"/>
    <property type="project" value="UniProtKB-KW"/>
</dbReference>
<dbReference type="GO" id="GO:0006226">
    <property type="term" value="P:dUMP biosynthetic process"/>
    <property type="evidence" value="ECO:0007669"/>
    <property type="project" value="UniProtKB-UniPathway"/>
</dbReference>
<dbReference type="GO" id="GO:0006229">
    <property type="term" value="P:dUTP biosynthetic process"/>
    <property type="evidence" value="ECO:0007669"/>
    <property type="project" value="UniProtKB-UniRule"/>
</dbReference>
<dbReference type="GO" id="GO:0015949">
    <property type="term" value="P:nucleobase-containing small molecule interconversion"/>
    <property type="evidence" value="ECO:0007669"/>
    <property type="project" value="TreeGrafter"/>
</dbReference>
<dbReference type="CDD" id="cd07557">
    <property type="entry name" value="trimeric_dUTPase"/>
    <property type="match status" value="1"/>
</dbReference>
<dbReference type="FunFam" id="2.70.40.10:FF:000001">
    <property type="entry name" value="dCTP deaminase"/>
    <property type="match status" value="1"/>
</dbReference>
<dbReference type="Gene3D" id="2.70.40.10">
    <property type="match status" value="1"/>
</dbReference>
<dbReference type="HAMAP" id="MF_00146">
    <property type="entry name" value="dCTP_deaminase"/>
    <property type="match status" value="1"/>
</dbReference>
<dbReference type="InterPro" id="IPR011962">
    <property type="entry name" value="dCTP_deaminase"/>
</dbReference>
<dbReference type="InterPro" id="IPR036157">
    <property type="entry name" value="dUTPase-like_sf"/>
</dbReference>
<dbReference type="InterPro" id="IPR033704">
    <property type="entry name" value="dUTPase_trimeric"/>
</dbReference>
<dbReference type="NCBIfam" id="TIGR02274">
    <property type="entry name" value="dCTP_deam"/>
    <property type="match status" value="1"/>
</dbReference>
<dbReference type="PANTHER" id="PTHR42680">
    <property type="entry name" value="DCTP DEAMINASE"/>
    <property type="match status" value="1"/>
</dbReference>
<dbReference type="PANTHER" id="PTHR42680:SF3">
    <property type="entry name" value="DCTP DEAMINASE"/>
    <property type="match status" value="1"/>
</dbReference>
<dbReference type="Pfam" id="PF22769">
    <property type="entry name" value="DCD"/>
    <property type="match status" value="1"/>
</dbReference>
<dbReference type="SUPFAM" id="SSF51283">
    <property type="entry name" value="dUTPase-like"/>
    <property type="match status" value="1"/>
</dbReference>
<comment type="function">
    <text evidence="1">Catalyzes the deamination of dCTP to dUTP.</text>
</comment>
<comment type="catalytic activity">
    <reaction evidence="1">
        <text>dCTP + H2O + H(+) = dUTP + NH4(+)</text>
        <dbReference type="Rhea" id="RHEA:22680"/>
        <dbReference type="ChEBI" id="CHEBI:15377"/>
        <dbReference type="ChEBI" id="CHEBI:15378"/>
        <dbReference type="ChEBI" id="CHEBI:28938"/>
        <dbReference type="ChEBI" id="CHEBI:61481"/>
        <dbReference type="ChEBI" id="CHEBI:61555"/>
        <dbReference type="EC" id="3.5.4.13"/>
    </reaction>
</comment>
<comment type="pathway">
    <text evidence="1">Pyrimidine metabolism; dUMP biosynthesis; dUMP from dCTP (dUTP route): step 1/2.</text>
</comment>
<comment type="subunit">
    <text evidence="1">Homotrimer.</text>
</comment>
<comment type="interaction">
    <interactant intactId="EBI-1271615">
        <id>Q9PN07</id>
    </interactant>
    <interactant intactId="EBI-1271444">
        <id>Q9PMS6</id>
        <label>Cj1374c</label>
    </interactant>
    <organismsDiffer>false</organismsDiffer>
    <experiments>3</experiments>
</comment>
<comment type="similarity">
    <text evidence="1">Belongs to the dCTP deaminase family.</text>
</comment>
<gene>
    <name evidence="1" type="primary">dcd</name>
    <name type="ordered locus">Cj1292</name>
</gene>
<sequence>MGLKADNWIRKMALEHKMIEPFCEANIGKGVVSYGLSSYGYDIRVGREFKIFTNVNSTVVDPKNFVEENVVDFEGDVCIVPANSFALARTIEYFKMPDNVLAICLGKSTYARCGIIVNVTPFEPGFEGHITIEISNTTPLPAKIYANEGIAQVLFLQGDEKCDTTYKDKKGKYQAQTGITLPRILK</sequence>
<protein>
    <recommendedName>
        <fullName evidence="1">dCTP deaminase</fullName>
        <ecNumber evidence="1">3.5.4.13</ecNumber>
    </recommendedName>
    <alternativeName>
        <fullName evidence="1">Deoxycytidine triphosphate deaminase</fullName>
    </alternativeName>
</protein>
<feature type="chain" id="PRO_0000155972" description="dCTP deaminase">
    <location>
        <begin position="1"/>
        <end position="186"/>
    </location>
</feature>
<feature type="active site" description="Proton donor/acceptor" evidence="1">
    <location>
        <position position="133"/>
    </location>
</feature>
<feature type="binding site" evidence="1">
    <location>
        <begin position="107"/>
        <end position="112"/>
    </location>
    <ligand>
        <name>dCTP</name>
        <dbReference type="ChEBI" id="CHEBI:61481"/>
    </ligand>
</feature>
<feature type="binding site" evidence="1">
    <location>
        <position position="152"/>
    </location>
    <ligand>
        <name>dCTP</name>
        <dbReference type="ChEBI" id="CHEBI:61481"/>
    </ligand>
</feature>
<feature type="binding site" evidence="1">
    <location>
        <position position="166"/>
    </location>
    <ligand>
        <name>dCTP</name>
        <dbReference type="ChEBI" id="CHEBI:61481"/>
    </ligand>
</feature>
<feature type="binding site" evidence="1">
    <location>
        <position position="176"/>
    </location>
    <ligand>
        <name>dCTP</name>
        <dbReference type="ChEBI" id="CHEBI:61481"/>
    </ligand>
</feature>
<evidence type="ECO:0000255" key="1">
    <source>
        <dbReference type="HAMAP-Rule" id="MF_00146"/>
    </source>
</evidence>
<accession>Q9PN07</accession>
<accession>Q0P8W5</accession>
<name>DCD_CAMJE</name>
<proteinExistence type="evidence at protein level"/>
<keyword id="KW-0378">Hydrolase</keyword>
<keyword id="KW-0546">Nucleotide metabolism</keyword>
<keyword id="KW-0547">Nucleotide-binding</keyword>
<keyword id="KW-1185">Reference proteome</keyword>
<reference key="1">
    <citation type="journal article" date="2000" name="Nature">
        <title>The genome sequence of the food-borne pathogen Campylobacter jejuni reveals hypervariable sequences.</title>
        <authorList>
            <person name="Parkhill J."/>
            <person name="Wren B.W."/>
            <person name="Mungall K.L."/>
            <person name="Ketley J.M."/>
            <person name="Churcher C.M."/>
            <person name="Basham D."/>
            <person name="Chillingworth T."/>
            <person name="Davies R.M."/>
            <person name="Feltwell T."/>
            <person name="Holroyd S."/>
            <person name="Jagels K."/>
            <person name="Karlyshev A.V."/>
            <person name="Moule S."/>
            <person name="Pallen M.J."/>
            <person name="Penn C.W."/>
            <person name="Quail M.A."/>
            <person name="Rajandream M.A."/>
            <person name="Rutherford K.M."/>
            <person name="van Vliet A.H.M."/>
            <person name="Whitehead S."/>
            <person name="Barrell B.G."/>
        </authorList>
    </citation>
    <scope>NUCLEOTIDE SEQUENCE [LARGE SCALE GENOMIC DNA]</scope>
    <source>
        <strain>ATCC 700819 / NCTC 11168</strain>
    </source>
</reference>